<keyword id="KW-0025">Alternative splicing</keyword>
<keyword id="KW-1185">Reference proteome</keyword>
<organism>
    <name type="scientific">Homo sapiens</name>
    <name type="common">Human</name>
    <dbReference type="NCBI Taxonomy" id="9606"/>
    <lineage>
        <taxon>Eukaryota</taxon>
        <taxon>Metazoa</taxon>
        <taxon>Chordata</taxon>
        <taxon>Craniata</taxon>
        <taxon>Vertebrata</taxon>
        <taxon>Euteleostomi</taxon>
        <taxon>Mammalia</taxon>
        <taxon>Eutheria</taxon>
        <taxon>Euarchontoglires</taxon>
        <taxon>Primates</taxon>
        <taxon>Haplorrhini</taxon>
        <taxon>Catarrhini</taxon>
        <taxon>Hominidae</taxon>
        <taxon>Homo</taxon>
    </lineage>
</organism>
<name>PDZD9_HUMAN</name>
<feature type="chain" id="PRO_0000271215" description="PDZ domain-containing protein 9">
    <location>
        <begin position="1"/>
        <end position="264"/>
    </location>
</feature>
<feature type="domain" description="PDZ" evidence="1">
    <location>
        <begin position="30"/>
        <end position="109"/>
    </location>
</feature>
<feature type="splice variant" id="VSP_022286" description="In isoform 2." evidence="2">
    <location>
        <begin position="1"/>
        <end position="62"/>
    </location>
</feature>
<feature type="splice variant" id="VSP_053798" description="In isoform 3." evidence="3">
    <location>
        <begin position="11"/>
        <end position="70"/>
    </location>
</feature>
<feature type="splice variant" id="VSP_022287" description="In isoform 2." evidence="2">
    <original>ANDGKLQP</original>
    <variation>MAEGEEEG</variation>
    <location>
        <begin position="63"/>
        <end position="70"/>
    </location>
</feature>
<gene>
    <name type="primary">PDZD9</name>
    <name type="synonym">C16orf65</name>
</gene>
<evidence type="ECO:0000255" key="1">
    <source>
        <dbReference type="PROSITE-ProRule" id="PRU00143"/>
    </source>
</evidence>
<evidence type="ECO:0000303" key="2">
    <source>
    </source>
</evidence>
<evidence type="ECO:0000305" key="3"/>
<comment type="alternative products">
    <event type="alternative splicing"/>
    <isoform>
        <id>Q8IXQ8-1</id>
        <name>1</name>
        <sequence type="displayed"/>
    </isoform>
    <isoform>
        <id>Q8IXQ8-2</id>
        <name>2</name>
        <sequence type="described" ref="VSP_022286 VSP_022287"/>
    </isoform>
    <isoform>
        <id>Q8IXQ8-3</id>
        <name>3</name>
        <sequence type="described" ref="VSP_053798"/>
    </isoform>
</comment>
<reference key="1">
    <citation type="journal article" date="2004" name="Nature">
        <title>The sequence and analysis of duplication-rich human chromosome 16.</title>
        <authorList>
            <person name="Martin J."/>
            <person name="Han C."/>
            <person name="Gordon L.A."/>
            <person name="Terry A."/>
            <person name="Prabhakar S."/>
            <person name="She X."/>
            <person name="Xie G."/>
            <person name="Hellsten U."/>
            <person name="Chan Y.M."/>
            <person name="Altherr M."/>
            <person name="Couronne O."/>
            <person name="Aerts A."/>
            <person name="Bajorek E."/>
            <person name="Black S."/>
            <person name="Blumer H."/>
            <person name="Branscomb E."/>
            <person name="Brown N.C."/>
            <person name="Bruno W.J."/>
            <person name="Buckingham J.M."/>
            <person name="Callen D.F."/>
            <person name="Campbell C.S."/>
            <person name="Campbell M.L."/>
            <person name="Campbell E.W."/>
            <person name="Caoile C."/>
            <person name="Challacombe J.F."/>
            <person name="Chasteen L.A."/>
            <person name="Chertkov O."/>
            <person name="Chi H.C."/>
            <person name="Christensen M."/>
            <person name="Clark L.M."/>
            <person name="Cohn J.D."/>
            <person name="Denys M."/>
            <person name="Detter J.C."/>
            <person name="Dickson M."/>
            <person name="Dimitrijevic-Bussod M."/>
            <person name="Escobar J."/>
            <person name="Fawcett J.J."/>
            <person name="Flowers D."/>
            <person name="Fotopulos D."/>
            <person name="Glavina T."/>
            <person name="Gomez M."/>
            <person name="Gonzales E."/>
            <person name="Goodstein D."/>
            <person name="Goodwin L.A."/>
            <person name="Grady D.L."/>
            <person name="Grigoriev I."/>
            <person name="Groza M."/>
            <person name="Hammon N."/>
            <person name="Hawkins T."/>
            <person name="Haydu L."/>
            <person name="Hildebrand C.E."/>
            <person name="Huang W."/>
            <person name="Israni S."/>
            <person name="Jett J."/>
            <person name="Jewett P.B."/>
            <person name="Kadner K."/>
            <person name="Kimball H."/>
            <person name="Kobayashi A."/>
            <person name="Krawczyk M.-C."/>
            <person name="Leyba T."/>
            <person name="Longmire J.L."/>
            <person name="Lopez F."/>
            <person name="Lou Y."/>
            <person name="Lowry S."/>
            <person name="Ludeman T."/>
            <person name="Manohar C.F."/>
            <person name="Mark G.A."/>
            <person name="McMurray K.L."/>
            <person name="Meincke L.J."/>
            <person name="Morgan J."/>
            <person name="Moyzis R.K."/>
            <person name="Mundt M.O."/>
            <person name="Munk A.C."/>
            <person name="Nandkeshwar R.D."/>
            <person name="Pitluck S."/>
            <person name="Pollard M."/>
            <person name="Predki P."/>
            <person name="Parson-Quintana B."/>
            <person name="Ramirez L."/>
            <person name="Rash S."/>
            <person name="Retterer J."/>
            <person name="Ricke D.O."/>
            <person name="Robinson D.L."/>
            <person name="Rodriguez A."/>
            <person name="Salamov A."/>
            <person name="Saunders E.H."/>
            <person name="Scott D."/>
            <person name="Shough T."/>
            <person name="Stallings R.L."/>
            <person name="Stalvey M."/>
            <person name="Sutherland R.D."/>
            <person name="Tapia R."/>
            <person name="Tesmer J.G."/>
            <person name="Thayer N."/>
            <person name="Thompson L.S."/>
            <person name="Tice H."/>
            <person name="Torney D.C."/>
            <person name="Tran-Gyamfi M."/>
            <person name="Tsai M."/>
            <person name="Ulanovsky L.E."/>
            <person name="Ustaszewska A."/>
            <person name="Vo N."/>
            <person name="White P.S."/>
            <person name="Williams A.L."/>
            <person name="Wills P.L."/>
            <person name="Wu J.-R."/>
            <person name="Wu K."/>
            <person name="Yang J."/>
            <person name="DeJong P."/>
            <person name="Bruce D."/>
            <person name="Doggett N.A."/>
            <person name="Deaven L."/>
            <person name="Schmutz J."/>
            <person name="Grimwood J."/>
            <person name="Richardson P."/>
            <person name="Rokhsar D.S."/>
            <person name="Eichler E.E."/>
            <person name="Gilna P."/>
            <person name="Lucas S.M."/>
            <person name="Myers R.M."/>
            <person name="Rubin E.M."/>
            <person name="Pennacchio L.A."/>
        </authorList>
    </citation>
    <scope>NUCLEOTIDE SEQUENCE [LARGE SCALE GENOMIC DNA]</scope>
</reference>
<reference key="2">
    <citation type="journal article" date="2004" name="Genome Res.">
        <title>The status, quality, and expansion of the NIH full-length cDNA project: the Mammalian Gene Collection (MGC).</title>
        <authorList>
            <consortium name="The MGC Project Team"/>
        </authorList>
    </citation>
    <scope>NUCLEOTIDE SEQUENCE [LARGE SCALE MRNA] (ISOFORM 2)</scope>
    <source>
        <tissue>Brain</tissue>
        <tissue>Testis</tissue>
    </source>
</reference>
<proteinExistence type="evidence at transcript level"/>
<accession>Q8IXQ8</accession>
<accession>F5GWW8</accession>
<dbReference type="EMBL" id="AC092119">
    <property type="status" value="NOT_ANNOTATED_CDS"/>
    <property type="molecule type" value="Genomic_DNA"/>
</dbReference>
<dbReference type="EMBL" id="BC021724">
    <property type="protein sequence ID" value="AAH21724.1"/>
    <property type="molecule type" value="mRNA"/>
</dbReference>
<dbReference type="EMBL" id="BC028605">
    <property type="protein sequence ID" value="AAH28605.1"/>
    <property type="molecule type" value="mRNA"/>
</dbReference>
<dbReference type="EMBL" id="BC039562">
    <property type="protein sequence ID" value="AAH39562.1"/>
    <property type="molecule type" value="mRNA"/>
</dbReference>
<dbReference type="CCDS" id="CCDS10602.2">
    <molecule id="Q8IXQ8-3"/>
</dbReference>
<dbReference type="CCDS" id="CCDS92124.1">
    <molecule id="Q8IXQ8-1"/>
</dbReference>
<dbReference type="RefSeq" id="NP_001350448.1">
    <molecule id="Q8IXQ8-1"/>
    <property type="nucleotide sequence ID" value="NM_001363519.1"/>
</dbReference>
<dbReference type="RefSeq" id="NP_001357459.1">
    <molecule id="Q8IXQ8-2"/>
    <property type="nucleotide sequence ID" value="NM_001370530.1"/>
</dbReference>
<dbReference type="RefSeq" id="NP_776167.2">
    <molecule id="Q8IXQ8-3"/>
    <property type="nucleotide sequence ID" value="NM_173806.4"/>
</dbReference>
<dbReference type="RefSeq" id="XP_006721092.1">
    <property type="nucleotide sequence ID" value="XM_006721029.3"/>
</dbReference>
<dbReference type="SMR" id="Q8IXQ8"/>
<dbReference type="BioGRID" id="129119">
    <property type="interactions" value="9"/>
</dbReference>
<dbReference type="FunCoup" id="Q8IXQ8">
    <property type="interactions" value="15"/>
</dbReference>
<dbReference type="IntAct" id="Q8IXQ8">
    <property type="interactions" value="1"/>
</dbReference>
<dbReference type="MINT" id="Q8IXQ8"/>
<dbReference type="STRING" id="9606.ENSP00000441685"/>
<dbReference type="iPTMnet" id="Q8IXQ8"/>
<dbReference type="PhosphoSitePlus" id="Q8IXQ8"/>
<dbReference type="BioMuta" id="PDZD9"/>
<dbReference type="DMDM" id="122063376"/>
<dbReference type="MassIVE" id="Q8IXQ8"/>
<dbReference type="PaxDb" id="9606-ENSP00000441685"/>
<dbReference type="PeptideAtlas" id="Q8IXQ8"/>
<dbReference type="Antibodypedia" id="25794">
    <property type="antibodies" value="54 antibodies from 12 providers"/>
</dbReference>
<dbReference type="DNASU" id="255762"/>
<dbReference type="Ensembl" id="ENST00000424898.3">
    <molecule id="Q8IXQ8-1"/>
    <property type="protein sequence ID" value="ENSP00000400514.2"/>
    <property type="gene ID" value="ENSG00000155714.14"/>
</dbReference>
<dbReference type="Ensembl" id="ENST00000537222.6">
    <molecule id="Q8IXQ8-3"/>
    <property type="protein sequence ID" value="ENSP00000441685.2"/>
    <property type="gene ID" value="ENSG00000155714.14"/>
</dbReference>
<dbReference type="Ensembl" id="ENST00000639637.2">
    <molecule id="Q8IXQ8-1"/>
    <property type="protein sequence ID" value="ENSP00000492626.2"/>
    <property type="gene ID" value="ENSG00000284316.2"/>
</dbReference>
<dbReference type="Ensembl" id="ENST00000639732.2">
    <molecule id="Q8IXQ8-1"/>
    <property type="protein sequence ID" value="ENSP00000491386.1"/>
    <property type="gene ID" value="ENSG00000284316.2"/>
</dbReference>
<dbReference type="GeneID" id="255762"/>
<dbReference type="KEGG" id="hsa:255762"/>
<dbReference type="MANE-Select" id="ENST00000424898.3">
    <property type="protein sequence ID" value="ENSP00000400514.2"/>
    <property type="RefSeq nucleotide sequence ID" value="NM_001363519.1"/>
    <property type="RefSeq protein sequence ID" value="NP_001350448.1"/>
</dbReference>
<dbReference type="UCSC" id="uc021ter.2">
    <molecule id="Q8IXQ8-1"/>
    <property type="organism name" value="human"/>
</dbReference>
<dbReference type="AGR" id="HGNC:28740"/>
<dbReference type="CTD" id="255762"/>
<dbReference type="DisGeNET" id="255762"/>
<dbReference type="GeneCards" id="PDZD9"/>
<dbReference type="HGNC" id="HGNC:28740">
    <property type="gene designation" value="PDZD9"/>
</dbReference>
<dbReference type="HPA" id="ENSG00000155714">
    <property type="expression patterns" value="Tissue enriched (testis)"/>
</dbReference>
<dbReference type="MalaCards" id="PDZD9"/>
<dbReference type="neXtProt" id="NX_Q8IXQ8"/>
<dbReference type="OpenTargets" id="ENSG00000155714"/>
<dbReference type="PharmGKB" id="PA165450481"/>
<dbReference type="VEuPathDB" id="HostDB:ENSG00000155714"/>
<dbReference type="eggNOG" id="ENOG502RYRV">
    <property type="taxonomic scope" value="Eukaryota"/>
</dbReference>
<dbReference type="GeneTree" id="ENSGT00390000008326"/>
<dbReference type="HOGENOM" id="CLU_095719_0_0_1"/>
<dbReference type="InParanoid" id="Q8IXQ8"/>
<dbReference type="OMA" id="YWTMVKH"/>
<dbReference type="OrthoDB" id="9900486at2759"/>
<dbReference type="PAN-GO" id="Q8IXQ8">
    <property type="GO annotations" value="0 GO annotations based on evolutionary models"/>
</dbReference>
<dbReference type="PhylomeDB" id="Q8IXQ8"/>
<dbReference type="TreeFam" id="TF337738"/>
<dbReference type="PathwayCommons" id="Q8IXQ8"/>
<dbReference type="SignaLink" id="Q8IXQ8"/>
<dbReference type="BioGRID-ORCS" id="255762">
    <property type="hits" value="25 hits in 1137 CRISPR screens"/>
</dbReference>
<dbReference type="ChiTaRS" id="PDZD9">
    <property type="organism name" value="human"/>
</dbReference>
<dbReference type="GenomeRNAi" id="255762"/>
<dbReference type="Pharos" id="Q8IXQ8">
    <property type="development level" value="Tdark"/>
</dbReference>
<dbReference type="PRO" id="PR:Q8IXQ8"/>
<dbReference type="Proteomes" id="UP000005640">
    <property type="component" value="Chromosome 16"/>
</dbReference>
<dbReference type="RNAct" id="Q8IXQ8">
    <property type="molecule type" value="protein"/>
</dbReference>
<dbReference type="Bgee" id="ENSG00000155714">
    <property type="expression patterns" value="Expressed in left testis and 89 other cell types or tissues"/>
</dbReference>
<dbReference type="ExpressionAtlas" id="Q8IXQ8">
    <property type="expression patterns" value="baseline and differential"/>
</dbReference>
<dbReference type="Gene3D" id="2.30.42.10">
    <property type="match status" value="1"/>
</dbReference>
<dbReference type="InterPro" id="IPR001478">
    <property type="entry name" value="PDZ"/>
</dbReference>
<dbReference type="InterPro" id="IPR036034">
    <property type="entry name" value="PDZ_sf"/>
</dbReference>
<dbReference type="InterPro" id="IPR039179">
    <property type="entry name" value="PDZD9"/>
</dbReference>
<dbReference type="PANTHER" id="PTHR22698">
    <property type="entry name" value="PDZ DOMAIN-CONTAINING PROTEIN 9"/>
    <property type="match status" value="1"/>
</dbReference>
<dbReference type="PANTHER" id="PTHR22698:SF1">
    <property type="entry name" value="PDZ DOMAIN-CONTAINING PROTEIN 9"/>
    <property type="match status" value="1"/>
</dbReference>
<dbReference type="Pfam" id="PF00595">
    <property type="entry name" value="PDZ"/>
    <property type="match status" value="1"/>
</dbReference>
<dbReference type="SMART" id="SM00228">
    <property type="entry name" value="PDZ"/>
    <property type="match status" value="1"/>
</dbReference>
<dbReference type="SUPFAM" id="SSF50156">
    <property type="entry name" value="PDZ domain-like"/>
    <property type="match status" value="1"/>
</dbReference>
<dbReference type="PROSITE" id="PS50106">
    <property type="entry name" value="PDZ"/>
    <property type="match status" value="1"/>
</dbReference>
<protein>
    <recommendedName>
        <fullName>PDZ domain-containing protein 9</fullName>
    </recommendedName>
</protein>
<sequence>MQKASHKNKKERGVSNKVKTSVHNLSKTQQTKLTVGSLGLGLIIIQHGPYLQITHLIRKGAAANDGKLQPGDVLISVGHANVLGYTLREFLQLLQHITIGTVLQIKVYRDFINIPEEWQEIYDLIPEAKFPVTSTPKKIELAKDESFTSSDDNENVDLDKRLQYYRYPWSTVHHPARRPISISRDWHGYKKKNHTISVGKDINCDVMIHRDDKKEVRAPSPYWIMVKQDNESSSSSTSSTSDAFWLEDCAQVEEGKAQLVSKVG</sequence>